<keyword id="KW-1185">Reference proteome</keyword>
<gene>
    <name evidence="1" type="primary">nrdI</name>
    <name type="ordered locus">ML1735</name>
</gene>
<name>NRDI_MYCLE</name>
<accession>Q9CBP9</accession>
<protein>
    <recommendedName>
        <fullName evidence="1">Protein NrdI</fullName>
    </recommendedName>
</protein>
<organism>
    <name type="scientific">Mycobacterium leprae (strain TN)</name>
    <dbReference type="NCBI Taxonomy" id="272631"/>
    <lineage>
        <taxon>Bacteria</taxon>
        <taxon>Bacillati</taxon>
        <taxon>Actinomycetota</taxon>
        <taxon>Actinomycetes</taxon>
        <taxon>Mycobacteriales</taxon>
        <taxon>Mycobacteriaceae</taxon>
        <taxon>Mycobacterium</taxon>
    </lineage>
</organism>
<sequence length="138" mass="15166">MQAHNLVYFSSVSENTHRFVQKLGVPAMRIPLHSRIEVSDPYVLVLPTYGGGRTAPDLQAGGYVPKQVIAFLNNEYNRALICGVVAAGNTNFGAEFCYAGDVVARKCGVPYLYRFELMGTEDDVTAVRAGLANLWKEH</sequence>
<evidence type="ECO:0000255" key="1">
    <source>
        <dbReference type="HAMAP-Rule" id="MF_00128"/>
    </source>
</evidence>
<proteinExistence type="inferred from homology"/>
<dbReference type="EMBL" id="AL583923">
    <property type="protein sequence ID" value="CAC30688.1"/>
    <property type="molecule type" value="Genomic_DNA"/>
</dbReference>
<dbReference type="PIR" id="A87126">
    <property type="entry name" value="A87126"/>
</dbReference>
<dbReference type="RefSeq" id="NP_302196.1">
    <property type="nucleotide sequence ID" value="NC_002677.1"/>
</dbReference>
<dbReference type="SMR" id="Q9CBP9"/>
<dbReference type="STRING" id="272631.gene:17575580"/>
<dbReference type="KEGG" id="mle:ML1735"/>
<dbReference type="PATRIC" id="fig|272631.5.peg.3261"/>
<dbReference type="Leproma" id="ML1735"/>
<dbReference type="eggNOG" id="COG1780">
    <property type="taxonomic scope" value="Bacteria"/>
</dbReference>
<dbReference type="HOGENOM" id="CLU_114845_0_0_11"/>
<dbReference type="OrthoDB" id="350535at2"/>
<dbReference type="Proteomes" id="UP000000806">
    <property type="component" value="Chromosome"/>
</dbReference>
<dbReference type="GO" id="GO:0010181">
    <property type="term" value="F:FMN binding"/>
    <property type="evidence" value="ECO:0007669"/>
    <property type="project" value="InterPro"/>
</dbReference>
<dbReference type="GO" id="GO:0036211">
    <property type="term" value="P:protein modification process"/>
    <property type="evidence" value="ECO:0007669"/>
    <property type="project" value="InterPro"/>
</dbReference>
<dbReference type="Gene3D" id="3.40.50.360">
    <property type="match status" value="1"/>
</dbReference>
<dbReference type="HAMAP" id="MF_00128">
    <property type="entry name" value="NrdI"/>
    <property type="match status" value="1"/>
</dbReference>
<dbReference type="InterPro" id="IPR029039">
    <property type="entry name" value="Flavoprotein-like_sf"/>
</dbReference>
<dbReference type="InterPro" id="IPR020852">
    <property type="entry name" value="RNR_Ib_NrdI_bac"/>
</dbReference>
<dbReference type="InterPro" id="IPR004465">
    <property type="entry name" value="RNR_NrdI"/>
</dbReference>
<dbReference type="NCBIfam" id="TIGR00333">
    <property type="entry name" value="nrdI"/>
    <property type="match status" value="1"/>
</dbReference>
<dbReference type="PANTHER" id="PTHR37297">
    <property type="entry name" value="PROTEIN NRDI"/>
    <property type="match status" value="1"/>
</dbReference>
<dbReference type="PANTHER" id="PTHR37297:SF1">
    <property type="entry name" value="PROTEIN NRDI"/>
    <property type="match status" value="1"/>
</dbReference>
<dbReference type="Pfam" id="PF07972">
    <property type="entry name" value="Flavodoxin_NdrI"/>
    <property type="match status" value="1"/>
</dbReference>
<dbReference type="PIRSF" id="PIRSF005087">
    <property type="entry name" value="NrdI"/>
    <property type="match status" value="1"/>
</dbReference>
<dbReference type="SUPFAM" id="SSF52218">
    <property type="entry name" value="Flavoproteins"/>
    <property type="match status" value="1"/>
</dbReference>
<reference key="1">
    <citation type="journal article" date="2001" name="Nature">
        <title>Massive gene decay in the leprosy bacillus.</title>
        <authorList>
            <person name="Cole S.T."/>
            <person name="Eiglmeier K."/>
            <person name="Parkhill J."/>
            <person name="James K.D."/>
            <person name="Thomson N.R."/>
            <person name="Wheeler P.R."/>
            <person name="Honore N."/>
            <person name="Garnier T."/>
            <person name="Churcher C.M."/>
            <person name="Harris D.E."/>
            <person name="Mungall K.L."/>
            <person name="Basham D."/>
            <person name="Brown D."/>
            <person name="Chillingworth T."/>
            <person name="Connor R."/>
            <person name="Davies R.M."/>
            <person name="Devlin K."/>
            <person name="Duthoy S."/>
            <person name="Feltwell T."/>
            <person name="Fraser A."/>
            <person name="Hamlin N."/>
            <person name="Holroyd S."/>
            <person name="Hornsby T."/>
            <person name="Jagels K."/>
            <person name="Lacroix C."/>
            <person name="Maclean J."/>
            <person name="Moule S."/>
            <person name="Murphy L.D."/>
            <person name="Oliver K."/>
            <person name="Quail M.A."/>
            <person name="Rajandream M.A."/>
            <person name="Rutherford K.M."/>
            <person name="Rutter S."/>
            <person name="Seeger K."/>
            <person name="Simon S."/>
            <person name="Simmonds M."/>
            <person name="Skelton J."/>
            <person name="Squares R."/>
            <person name="Squares S."/>
            <person name="Stevens K."/>
            <person name="Taylor K."/>
            <person name="Whitehead S."/>
            <person name="Woodward J.R."/>
            <person name="Barrell B.G."/>
        </authorList>
    </citation>
    <scope>NUCLEOTIDE SEQUENCE [LARGE SCALE GENOMIC DNA]</scope>
    <source>
        <strain>TN</strain>
    </source>
</reference>
<comment type="function">
    <text evidence="1">Probably involved in ribonucleotide reductase function.</text>
</comment>
<comment type="similarity">
    <text evidence="1">Belongs to the NrdI family.</text>
</comment>
<feature type="chain" id="PRO_0000164326" description="Protein NrdI">
    <location>
        <begin position="1"/>
        <end position="138"/>
    </location>
</feature>